<sequence length="333" mass="36777">MGLLERLRKEWFIAGIALVIAAARLEPAVGVKGGPLKPEITITYIAVSAIFFNSGLSLKTEELTSALMHVKLHLFVQIFTLVFFPTAIWLFLQLLSITPINEWLLKGLQTVGCMPPPVSSAVILTKAVGGNEAAAIFNSAFGSFLLGSSSSVPFTSIFSQLFMTVVVPLIIGQIVRRYIKDWLERRKPPFGTISSCVLLMIIYTTFCDTFANPNIDLDKFSLIIIVFIIFSVQMSFMFLTFLFSTRSNSGFTPADTVAIIFCSTHKSLTLGIPMLKIVFAGYEHLSLISVPLLIYHPAQILLGSLLVPTIKSWMVSRQKALKLTRQPKVPVKV</sequence>
<dbReference type="EMBL" id="AJ720456">
    <property type="protein sequence ID" value="CAG32115.1"/>
    <property type="molecule type" value="mRNA"/>
</dbReference>
<dbReference type="RefSeq" id="NP_001026302.1">
    <property type="nucleotide sequence ID" value="NM_001031131.2"/>
</dbReference>
<dbReference type="SMR" id="Q5ZJH8"/>
<dbReference type="FunCoup" id="Q5ZJH8">
    <property type="interactions" value="543"/>
</dbReference>
<dbReference type="STRING" id="9031.ENSGALP00000066614"/>
<dbReference type="PaxDb" id="9031-ENSGALP00000037778"/>
<dbReference type="Ensembl" id="ENSGALT00010015641.1">
    <property type="protein sequence ID" value="ENSGALP00010009091.1"/>
    <property type="gene ID" value="ENSGALG00010006564.1"/>
</dbReference>
<dbReference type="GeneID" id="422467"/>
<dbReference type="KEGG" id="gga:422467"/>
<dbReference type="CTD" id="84068"/>
<dbReference type="VEuPathDB" id="HostDB:geneid_422467"/>
<dbReference type="eggNOG" id="KOG4821">
    <property type="taxonomic scope" value="Eukaryota"/>
</dbReference>
<dbReference type="GeneTree" id="ENSGT00390000011932"/>
<dbReference type="InParanoid" id="Q5ZJH8"/>
<dbReference type="OrthoDB" id="188035at2759"/>
<dbReference type="PhylomeDB" id="Q5ZJH8"/>
<dbReference type="PRO" id="PR:Q5ZJH8"/>
<dbReference type="Proteomes" id="UP000000539">
    <property type="component" value="Chromosome 4"/>
</dbReference>
<dbReference type="Bgee" id="ENSGALG00000010006">
    <property type="expression patterns" value="Expressed in colon and 12 other cell types or tissues"/>
</dbReference>
<dbReference type="GO" id="GO:0005789">
    <property type="term" value="C:endoplasmic reticulum membrane"/>
    <property type="evidence" value="ECO:0007669"/>
    <property type="project" value="UniProtKB-SubCell"/>
</dbReference>
<dbReference type="GO" id="GO:0000139">
    <property type="term" value="C:Golgi membrane"/>
    <property type="evidence" value="ECO:0007669"/>
    <property type="project" value="UniProtKB-SubCell"/>
</dbReference>
<dbReference type="GO" id="GO:0005886">
    <property type="term" value="C:plasma membrane"/>
    <property type="evidence" value="ECO:0000318"/>
    <property type="project" value="GO_Central"/>
</dbReference>
<dbReference type="GO" id="GO:0015293">
    <property type="term" value="F:symporter activity"/>
    <property type="evidence" value="ECO:0007669"/>
    <property type="project" value="UniProtKB-KW"/>
</dbReference>
<dbReference type="GO" id="GO:0006814">
    <property type="term" value="P:sodium ion transport"/>
    <property type="evidence" value="ECO:0007669"/>
    <property type="project" value="UniProtKB-KW"/>
</dbReference>
<dbReference type="FunFam" id="1.20.1530.20:FF:000008">
    <property type="entry name" value="Sodium/bile acid cotransporter"/>
    <property type="match status" value="1"/>
</dbReference>
<dbReference type="Gene3D" id="1.20.1530.20">
    <property type="match status" value="1"/>
</dbReference>
<dbReference type="InterPro" id="IPR038770">
    <property type="entry name" value="Na+/solute_symporter_sf"/>
</dbReference>
<dbReference type="InterPro" id="IPR016833">
    <property type="entry name" value="Put_Na-Bile_cotransptr"/>
</dbReference>
<dbReference type="PANTHER" id="PTHR18640:SF5">
    <property type="entry name" value="SODIUM_BILE ACID COTRANSPORTER 7"/>
    <property type="match status" value="1"/>
</dbReference>
<dbReference type="PANTHER" id="PTHR18640">
    <property type="entry name" value="SOLUTE CARRIER FAMILY 10 MEMBER 7"/>
    <property type="match status" value="1"/>
</dbReference>
<dbReference type="Pfam" id="PF13593">
    <property type="entry name" value="SBF_like"/>
    <property type="match status" value="1"/>
</dbReference>
<dbReference type="PIRSF" id="PIRSF026166">
    <property type="entry name" value="UCP026166"/>
    <property type="match status" value="1"/>
</dbReference>
<keyword id="KW-1003">Cell membrane</keyword>
<keyword id="KW-0256">Endoplasmic reticulum</keyword>
<keyword id="KW-0333">Golgi apparatus</keyword>
<keyword id="KW-0406">Ion transport</keyword>
<keyword id="KW-0472">Membrane</keyword>
<keyword id="KW-1185">Reference proteome</keyword>
<keyword id="KW-0915">Sodium</keyword>
<keyword id="KW-0739">Sodium transport</keyword>
<keyword id="KW-0769">Symport</keyword>
<keyword id="KW-0812">Transmembrane</keyword>
<keyword id="KW-1133">Transmembrane helix</keyword>
<keyword id="KW-0813">Transport</keyword>
<reference key="1">
    <citation type="journal article" date="2005" name="Genome Biol.">
        <title>Full-length cDNAs from chicken bursal lymphocytes to facilitate gene function analysis.</title>
        <authorList>
            <person name="Caldwell R.B."/>
            <person name="Kierzek A.M."/>
            <person name="Arakawa H."/>
            <person name="Bezzubov Y."/>
            <person name="Zaim J."/>
            <person name="Fiedler P."/>
            <person name="Kutter S."/>
            <person name="Blagodatski A."/>
            <person name="Kostovska D."/>
            <person name="Koter M."/>
            <person name="Plachy J."/>
            <person name="Carninci P."/>
            <person name="Hayashizaki Y."/>
            <person name="Buerstedde J.-M."/>
        </authorList>
    </citation>
    <scope>NUCLEOTIDE SEQUENCE [LARGE SCALE MRNA]</scope>
    <source>
        <strain>CB</strain>
        <tissue>Bursa of Fabricius</tissue>
    </source>
</reference>
<organism>
    <name type="scientific">Gallus gallus</name>
    <name type="common">Chicken</name>
    <dbReference type="NCBI Taxonomy" id="9031"/>
    <lineage>
        <taxon>Eukaryota</taxon>
        <taxon>Metazoa</taxon>
        <taxon>Chordata</taxon>
        <taxon>Craniata</taxon>
        <taxon>Vertebrata</taxon>
        <taxon>Euteleostomi</taxon>
        <taxon>Archelosauria</taxon>
        <taxon>Archosauria</taxon>
        <taxon>Dinosauria</taxon>
        <taxon>Saurischia</taxon>
        <taxon>Theropoda</taxon>
        <taxon>Coelurosauria</taxon>
        <taxon>Aves</taxon>
        <taxon>Neognathae</taxon>
        <taxon>Galloanserae</taxon>
        <taxon>Galliformes</taxon>
        <taxon>Phasianidae</taxon>
        <taxon>Phasianinae</taxon>
        <taxon>Gallus</taxon>
    </lineage>
</organism>
<name>NTCP7_CHICK</name>
<accession>Q5ZJH8</accession>
<protein>
    <recommendedName>
        <fullName>Sodium/bile acid cotransporter 7</fullName>
    </recommendedName>
    <alternativeName>
        <fullName>Na(+)/bile acid cotransporter 7</fullName>
    </alternativeName>
    <alternativeName>
        <fullName>Solute carrier family 10 member 7</fullName>
    </alternativeName>
</protein>
<gene>
    <name type="primary">SLC10A7</name>
    <name type="ORF">RCJMB04_18a5</name>
</gene>
<feature type="chain" id="PRO_0000278253" description="Sodium/bile acid cotransporter 7">
    <location>
        <begin position="1"/>
        <end position="333"/>
    </location>
</feature>
<feature type="topological domain" description="Cytoplasmic" evidence="1">
    <location>
        <begin position="1"/>
        <end position="10"/>
    </location>
</feature>
<feature type="transmembrane region" description="Helical" evidence="2">
    <location>
        <begin position="11"/>
        <end position="31"/>
    </location>
</feature>
<feature type="topological domain" description="Extracellular" evidence="1">
    <location>
        <begin position="32"/>
        <end position="37"/>
    </location>
</feature>
<feature type="transmembrane region" description="Helical" evidence="2">
    <location>
        <begin position="38"/>
        <end position="58"/>
    </location>
</feature>
<feature type="topological domain" description="Cytoplasmic" evidence="1">
    <location>
        <begin position="59"/>
        <end position="71"/>
    </location>
</feature>
<feature type="transmembrane region" description="Helical" evidence="2">
    <location>
        <begin position="72"/>
        <end position="92"/>
    </location>
</feature>
<feature type="topological domain" description="Extracellular" evidence="1">
    <location>
        <begin position="93"/>
        <end position="103"/>
    </location>
</feature>
<feature type="transmembrane region" description="Helical" evidence="2">
    <location>
        <begin position="104"/>
        <end position="124"/>
    </location>
</feature>
<feature type="topological domain" description="Cytoplasmic" evidence="1">
    <location>
        <begin position="125"/>
        <end position="126"/>
    </location>
</feature>
<feature type="transmembrane region" description="Helical" evidence="2">
    <location>
        <begin position="127"/>
        <end position="147"/>
    </location>
</feature>
<feature type="topological domain" description="Extracellular" evidence="1">
    <location>
        <begin position="148"/>
        <end position="151"/>
    </location>
</feature>
<feature type="transmembrane region" description="Helical" evidence="2">
    <location>
        <begin position="152"/>
        <end position="172"/>
    </location>
</feature>
<feature type="topological domain" description="Cytoplasmic" evidence="1">
    <location>
        <begin position="173"/>
        <end position="189"/>
    </location>
</feature>
<feature type="transmembrane region" description="Helical" evidence="2">
    <location>
        <begin position="190"/>
        <end position="210"/>
    </location>
</feature>
<feature type="topological domain" description="Extracellular" evidence="1">
    <location>
        <begin position="211"/>
        <end position="222"/>
    </location>
</feature>
<feature type="transmembrane region" description="Helical" evidence="2">
    <location>
        <begin position="223"/>
        <end position="243"/>
    </location>
</feature>
<feature type="topological domain" description="Cytoplasmic" evidence="1">
    <location>
        <begin position="244"/>
        <end position="258"/>
    </location>
</feature>
<feature type="transmembrane region" description="Helical" evidence="2">
    <location>
        <begin position="259"/>
        <end position="279"/>
    </location>
</feature>
<feature type="topological domain" description="Extracellular" evidence="1">
    <location>
        <begin position="280"/>
        <end position="286"/>
    </location>
</feature>
<feature type="transmembrane region" description="Helical" evidence="2">
    <location>
        <begin position="287"/>
        <end position="307"/>
    </location>
</feature>
<feature type="topological domain" description="Cytoplasmic" evidence="1">
    <location>
        <begin position="308"/>
        <end position="333"/>
    </location>
</feature>
<comment type="function">
    <text evidence="1">Involved in teeth and skeletal development. Has an essential role in the biosynthesis and trafficking of glycosaminoglycans and glycoproteins to produce a proper functioning extracellular matrix. Required for extracellular matrix mineralization. Also involved in the regulation of cellular calcium homeostasis. Does not show transport activity towards bile acids or steroid sulfates.</text>
</comment>
<comment type="subcellular location">
    <subcellularLocation>
        <location evidence="1">Cell membrane</location>
        <topology evidence="1">Multi-pass membrane protein</topology>
    </subcellularLocation>
    <subcellularLocation>
        <location evidence="1">Endoplasmic reticulum membrane</location>
        <topology evidence="1">Multi-pass membrane protein</topology>
    </subcellularLocation>
    <subcellularLocation>
        <location evidence="1">Golgi apparatus membrane</location>
    </subcellularLocation>
</comment>
<comment type="similarity">
    <text evidence="3">Belongs to the bile acid:sodium symporter (BASS) (TC 2.A.28) family.</text>
</comment>
<proteinExistence type="evidence at transcript level"/>
<evidence type="ECO:0000250" key="1">
    <source>
        <dbReference type="UniProtKB" id="Q0GE19"/>
    </source>
</evidence>
<evidence type="ECO:0000255" key="2"/>
<evidence type="ECO:0000305" key="3"/>